<feature type="chain" id="PRO_0000140725" description="3-dehydroquinate synthase">
    <location>
        <begin position="1"/>
        <end position="373"/>
    </location>
</feature>
<feature type="binding site" evidence="2">
    <location>
        <begin position="67"/>
        <end position="72"/>
    </location>
    <ligand>
        <name>NAD(+)</name>
        <dbReference type="ChEBI" id="CHEBI:57540"/>
    </ligand>
</feature>
<feature type="binding site" evidence="2">
    <location>
        <begin position="101"/>
        <end position="105"/>
    </location>
    <ligand>
        <name>NAD(+)</name>
        <dbReference type="ChEBI" id="CHEBI:57540"/>
    </ligand>
</feature>
<feature type="binding site" evidence="2">
    <location>
        <begin position="125"/>
        <end position="126"/>
    </location>
    <ligand>
        <name>NAD(+)</name>
        <dbReference type="ChEBI" id="CHEBI:57540"/>
    </ligand>
</feature>
<feature type="binding site" evidence="2">
    <location>
        <position position="138"/>
    </location>
    <ligand>
        <name>NAD(+)</name>
        <dbReference type="ChEBI" id="CHEBI:57540"/>
    </ligand>
</feature>
<feature type="binding site" evidence="3">
    <location>
        <position position="147"/>
    </location>
    <ligand>
        <name>NAD(+)</name>
        <dbReference type="ChEBI" id="CHEBI:57540"/>
    </ligand>
</feature>
<feature type="binding site" evidence="2">
    <location>
        <position position="180"/>
    </location>
    <ligand>
        <name>Zn(2+)</name>
        <dbReference type="ChEBI" id="CHEBI:29105"/>
    </ligand>
</feature>
<feature type="binding site" evidence="2">
    <location>
        <position position="240"/>
    </location>
    <ligand>
        <name>Zn(2+)</name>
        <dbReference type="ChEBI" id="CHEBI:29105"/>
    </ligand>
</feature>
<feature type="binding site" evidence="2">
    <location>
        <position position="256"/>
    </location>
    <ligand>
        <name>Zn(2+)</name>
        <dbReference type="ChEBI" id="CHEBI:29105"/>
    </ligand>
</feature>
<dbReference type="EC" id="4.2.3.4" evidence="1"/>
<dbReference type="EMBL" id="AE002160">
    <property type="protein sequence ID" value="AAF73582.1"/>
    <property type="molecule type" value="Genomic_DNA"/>
</dbReference>
<dbReference type="RefSeq" id="WP_010231103.1">
    <property type="nucleotide sequence ID" value="NZ_CP063055.1"/>
</dbReference>
<dbReference type="SMR" id="Q9PK25"/>
<dbReference type="GeneID" id="1246009"/>
<dbReference type="KEGG" id="cmu:TC_0648"/>
<dbReference type="eggNOG" id="COG0337">
    <property type="taxonomic scope" value="Bacteria"/>
</dbReference>
<dbReference type="HOGENOM" id="CLU_001201_0_1_0"/>
<dbReference type="OrthoDB" id="9806583at2"/>
<dbReference type="UniPathway" id="UPA00053">
    <property type="reaction ID" value="UER00085"/>
</dbReference>
<dbReference type="Proteomes" id="UP000000800">
    <property type="component" value="Chromosome"/>
</dbReference>
<dbReference type="GO" id="GO:0005737">
    <property type="term" value="C:cytoplasm"/>
    <property type="evidence" value="ECO:0007669"/>
    <property type="project" value="UniProtKB-SubCell"/>
</dbReference>
<dbReference type="GO" id="GO:0003856">
    <property type="term" value="F:3-dehydroquinate synthase activity"/>
    <property type="evidence" value="ECO:0007669"/>
    <property type="project" value="UniProtKB-EC"/>
</dbReference>
<dbReference type="GO" id="GO:0046872">
    <property type="term" value="F:metal ion binding"/>
    <property type="evidence" value="ECO:0007669"/>
    <property type="project" value="UniProtKB-KW"/>
</dbReference>
<dbReference type="GO" id="GO:0000166">
    <property type="term" value="F:nucleotide binding"/>
    <property type="evidence" value="ECO:0007669"/>
    <property type="project" value="UniProtKB-KW"/>
</dbReference>
<dbReference type="GO" id="GO:0008652">
    <property type="term" value="P:amino acid biosynthetic process"/>
    <property type="evidence" value="ECO:0007669"/>
    <property type="project" value="UniProtKB-KW"/>
</dbReference>
<dbReference type="GO" id="GO:0009073">
    <property type="term" value="P:aromatic amino acid family biosynthetic process"/>
    <property type="evidence" value="ECO:0007669"/>
    <property type="project" value="UniProtKB-KW"/>
</dbReference>
<dbReference type="GO" id="GO:0009423">
    <property type="term" value="P:chorismate biosynthetic process"/>
    <property type="evidence" value="ECO:0007669"/>
    <property type="project" value="UniProtKB-UniPathway"/>
</dbReference>
<dbReference type="CDD" id="cd08195">
    <property type="entry name" value="DHQS"/>
    <property type="match status" value="1"/>
</dbReference>
<dbReference type="FunFam" id="3.40.50.1970:FF:000007">
    <property type="entry name" value="Pentafunctional AROM polypeptide"/>
    <property type="match status" value="1"/>
</dbReference>
<dbReference type="Gene3D" id="3.40.50.1970">
    <property type="match status" value="1"/>
</dbReference>
<dbReference type="Gene3D" id="1.20.1090.10">
    <property type="entry name" value="Dehydroquinate synthase-like - alpha domain"/>
    <property type="match status" value="1"/>
</dbReference>
<dbReference type="InterPro" id="IPR050071">
    <property type="entry name" value="Dehydroquinate_synthase"/>
</dbReference>
<dbReference type="InterPro" id="IPR016037">
    <property type="entry name" value="DHQ_synth_AroB"/>
</dbReference>
<dbReference type="InterPro" id="IPR030963">
    <property type="entry name" value="DHQ_synth_fam"/>
</dbReference>
<dbReference type="InterPro" id="IPR030960">
    <property type="entry name" value="DHQS/DOIS_N"/>
</dbReference>
<dbReference type="InterPro" id="IPR056179">
    <property type="entry name" value="DHQS_C"/>
</dbReference>
<dbReference type="NCBIfam" id="TIGR01357">
    <property type="entry name" value="aroB"/>
    <property type="match status" value="1"/>
</dbReference>
<dbReference type="PANTHER" id="PTHR43622">
    <property type="entry name" value="3-DEHYDROQUINATE SYNTHASE"/>
    <property type="match status" value="1"/>
</dbReference>
<dbReference type="PANTHER" id="PTHR43622:SF7">
    <property type="entry name" value="3-DEHYDROQUINATE SYNTHASE, CHLOROPLASTIC"/>
    <property type="match status" value="1"/>
</dbReference>
<dbReference type="Pfam" id="PF01761">
    <property type="entry name" value="DHQ_synthase"/>
    <property type="match status" value="1"/>
</dbReference>
<dbReference type="Pfam" id="PF24621">
    <property type="entry name" value="DHQS_C"/>
    <property type="match status" value="1"/>
</dbReference>
<dbReference type="PIRSF" id="PIRSF001455">
    <property type="entry name" value="DHQ_synth"/>
    <property type="match status" value="1"/>
</dbReference>
<dbReference type="SUPFAM" id="SSF56796">
    <property type="entry name" value="Dehydroquinate synthase-like"/>
    <property type="match status" value="1"/>
</dbReference>
<organism>
    <name type="scientific">Chlamydia muridarum (strain MoPn / Nigg)</name>
    <dbReference type="NCBI Taxonomy" id="243161"/>
    <lineage>
        <taxon>Bacteria</taxon>
        <taxon>Pseudomonadati</taxon>
        <taxon>Chlamydiota</taxon>
        <taxon>Chlamydiia</taxon>
        <taxon>Chlamydiales</taxon>
        <taxon>Chlamydiaceae</taxon>
        <taxon>Chlamydia/Chlamydophila group</taxon>
        <taxon>Chlamydia</taxon>
    </lineage>
</organism>
<gene>
    <name type="primary">aroB</name>
    <name type="ordered locus">TC_0648</name>
</gene>
<evidence type="ECO:0000250" key="1">
    <source>
        <dbReference type="UniProtKB" id="P07639"/>
    </source>
</evidence>
<evidence type="ECO:0000250" key="2">
    <source>
        <dbReference type="UniProtKB" id="P9WPX9"/>
    </source>
</evidence>
<evidence type="ECO:0000250" key="3">
    <source>
        <dbReference type="UniProtKB" id="Q6GGU4"/>
    </source>
</evidence>
<evidence type="ECO:0000305" key="4"/>
<comment type="function">
    <text evidence="1">Catalyzes the conversion of 3-deoxy-D-arabino-heptulosonate 7-phosphate (DAHP) to dehydroquinate (DHQ).</text>
</comment>
<comment type="catalytic activity">
    <reaction evidence="1">
        <text>7-phospho-2-dehydro-3-deoxy-D-arabino-heptonate = 3-dehydroquinate + phosphate</text>
        <dbReference type="Rhea" id="RHEA:21968"/>
        <dbReference type="ChEBI" id="CHEBI:32364"/>
        <dbReference type="ChEBI" id="CHEBI:43474"/>
        <dbReference type="ChEBI" id="CHEBI:58394"/>
        <dbReference type="EC" id="4.2.3.4"/>
    </reaction>
</comment>
<comment type="cofactor">
    <cofactor evidence="1">
        <name>NAD(+)</name>
        <dbReference type="ChEBI" id="CHEBI:57540"/>
    </cofactor>
</comment>
<comment type="cofactor">
    <cofactor evidence="1">
        <name>Co(2+)</name>
        <dbReference type="ChEBI" id="CHEBI:48828"/>
    </cofactor>
    <cofactor evidence="1">
        <name>Zn(2+)</name>
        <dbReference type="ChEBI" id="CHEBI:29105"/>
    </cofactor>
    <text evidence="1">Binds 1 divalent metal cation per subunit. Can use either Co(2+) or Zn(2+).</text>
</comment>
<comment type="pathway">
    <text evidence="1">Metabolic intermediate biosynthesis; chorismate biosynthesis; chorismate from D-erythrose 4-phosphate and phosphoenolpyruvate: step 2/7.</text>
</comment>
<comment type="subcellular location">
    <subcellularLocation>
        <location evidence="1">Cytoplasm</location>
    </subcellularLocation>
</comment>
<comment type="similarity">
    <text evidence="4">Belongs to the sugar phosphate cyclases superfamily. Dehydroquinate synthase family.</text>
</comment>
<reference key="1">
    <citation type="journal article" date="2000" name="Nucleic Acids Res.">
        <title>Genome sequences of Chlamydia trachomatis MoPn and Chlamydia pneumoniae AR39.</title>
        <authorList>
            <person name="Read T.D."/>
            <person name="Brunham R.C."/>
            <person name="Shen C."/>
            <person name="Gill S.R."/>
            <person name="Heidelberg J.F."/>
            <person name="White O."/>
            <person name="Hickey E.K."/>
            <person name="Peterson J.D."/>
            <person name="Utterback T.R."/>
            <person name="Berry K.J."/>
            <person name="Bass S."/>
            <person name="Linher K.D."/>
            <person name="Weidman J.F."/>
            <person name="Khouri H.M."/>
            <person name="Craven B."/>
            <person name="Bowman C."/>
            <person name="Dodson R.J."/>
            <person name="Gwinn M.L."/>
            <person name="Nelson W.C."/>
            <person name="DeBoy R.T."/>
            <person name="Kolonay J.F."/>
            <person name="McClarty G."/>
            <person name="Salzberg S.L."/>
            <person name="Eisen J.A."/>
            <person name="Fraser C.M."/>
        </authorList>
    </citation>
    <scope>NUCLEOTIDE SEQUENCE [LARGE SCALE GENOMIC DNA]</scope>
    <source>
        <strain>MoPn / Nigg</strain>
    </source>
</reference>
<proteinExistence type="inferred from homology"/>
<keyword id="KW-0028">Amino-acid biosynthesis</keyword>
<keyword id="KW-0057">Aromatic amino acid biosynthesis</keyword>
<keyword id="KW-0170">Cobalt</keyword>
<keyword id="KW-0963">Cytoplasm</keyword>
<keyword id="KW-0456">Lyase</keyword>
<keyword id="KW-0479">Metal-binding</keyword>
<keyword id="KW-0520">NAD</keyword>
<keyword id="KW-0547">Nucleotide-binding</keyword>
<keyword id="KW-0862">Zinc</keyword>
<sequence length="373" mass="40842">MIELITDKPHPMHLVDSLCDPQLFATLAKTSPLIFITNSTLEILVLPPLLETARSLGFSVEILIIPEGEQAKTETTFLYLHKQLATLTIPRQATLIGVGGGVVLDIVGFVASTHCRGMPFIAVPTTLVAMIDASIGGKNGINLDHIKNRIGSFYLPKDVWICPSVLSSLPEQEFYHGIAECIKHAYIADASILPILQNPASLRSTKQLSLLIKRNCLCKASIVGKDIRDHGIRQILNFGHTLGHALEMLFTGKISHGFAISVGMVLETKLSLAMGVARNPNILHFLVQDLLRYQLPTSLKDLYAQAQIPIHSCSQILSALSYDKKKQNASLPPFVMIEEIGLAASCNGSFCQPASNHFLTHILKEDLHAMHDH</sequence>
<accession>Q9PK25</accession>
<protein>
    <recommendedName>
        <fullName evidence="1">3-dehydroquinate synthase</fullName>
        <shortName evidence="1">DHQS</shortName>
        <ecNumber evidence="1">4.2.3.4</ecNumber>
    </recommendedName>
</protein>
<name>AROB_CHLMU</name>